<evidence type="ECO:0000250" key="1">
    <source>
        <dbReference type="UniProtKB" id="P0AAN3"/>
    </source>
</evidence>
<evidence type="ECO:0000305" key="2"/>
<proteinExistence type="inferred from homology"/>
<reference key="1">
    <citation type="journal article" date="2002" name="Proc. Natl. Acad. Sci. U.S.A.">
        <title>Extensive mosaic structure revealed by the complete genome sequence of uropathogenic Escherichia coli.</title>
        <authorList>
            <person name="Welch R.A."/>
            <person name="Burland V."/>
            <person name="Plunkett G. III"/>
            <person name="Redford P."/>
            <person name="Roesch P."/>
            <person name="Rasko D."/>
            <person name="Buckles E.L."/>
            <person name="Liou S.-R."/>
            <person name="Boutin A."/>
            <person name="Hackett J."/>
            <person name="Stroud D."/>
            <person name="Mayhew G.F."/>
            <person name="Rose D.J."/>
            <person name="Zhou S."/>
            <person name="Schwartz D.C."/>
            <person name="Perna N.T."/>
            <person name="Mobley H.L.T."/>
            <person name="Donnenberg M.S."/>
            <person name="Blattner F.R."/>
        </authorList>
    </citation>
    <scope>NUCLEOTIDE SEQUENCE [LARGE SCALE GENOMIC DNA]</scope>
    <source>
        <strain>CFT073 / ATCC 700928 / UPEC</strain>
    </source>
</reference>
<protein>
    <recommendedName>
        <fullName evidence="1">Hydrogenase maturation factor HypB</fullName>
    </recommendedName>
</protein>
<feature type="chain" id="PRO_0000201441" description="Hydrogenase maturation factor HypB">
    <location>
        <begin position="1"/>
        <end position="290"/>
    </location>
</feature>
<feature type="region of interest" description="G-domain" evidence="1">
    <location>
        <begin position="106"/>
        <end position="267"/>
    </location>
</feature>
<feature type="binding site" evidence="1">
    <location>
        <position position="2"/>
    </location>
    <ligand>
        <name>Ni(2+)</name>
        <dbReference type="ChEBI" id="CHEBI:49786"/>
        <label>1</label>
    </ligand>
</feature>
<feature type="binding site" evidence="1">
    <location>
        <position position="5"/>
    </location>
    <ligand>
        <name>Ni(2+)</name>
        <dbReference type="ChEBI" id="CHEBI:49786"/>
        <label>1</label>
    </ligand>
</feature>
<feature type="binding site" evidence="1">
    <location>
        <position position="7"/>
    </location>
    <ligand>
        <name>Ni(2+)</name>
        <dbReference type="ChEBI" id="CHEBI:49786"/>
        <label>1</label>
    </ligand>
</feature>
<feature type="binding site" evidence="1">
    <location>
        <position position="166"/>
    </location>
    <ligand>
        <name>Ni(2+)</name>
        <dbReference type="ChEBI" id="CHEBI:49786"/>
        <label>2</label>
    </ligand>
</feature>
<feature type="binding site" evidence="1">
    <location>
        <position position="166"/>
    </location>
    <ligand>
        <name>Zn(2+)</name>
        <dbReference type="ChEBI" id="CHEBI:29105"/>
    </ligand>
</feature>
<feature type="binding site" evidence="1">
    <location>
        <position position="167"/>
    </location>
    <ligand>
        <name>Ni(2+)</name>
        <dbReference type="ChEBI" id="CHEBI:49786"/>
        <label>2</label>
    </ligand>
</feature>
<feature type="binding site" evidence="1">
    <location>
        <position position="167"/>
    </location>
    <ligand>
        <name>Zn(2+)</name>
        <dbReference type="ChEBI" id="CHEBI:29105"/>
    </ligand>
</feature>
<feature type="binding site" evidence="1">
    <location>
        <position position="198"/>
    </location>
    <ligand>
        <name>Ni(2+)</name>
        <dbReference type="ChEBI" id="CHEBI:49786"/>
        <label>2</label>
    </ligand>
</feature>
<feature type="binding site" evidence="1">
    <location>
        <position position="198"/>
    </location>
    <ligand>
        <name>Zn(2+)</name>
        <dbReference type="ChEBI" id="CHEBI:29105"/>
    </ligand>
</feature>
<name>HYPB_ECOL6</name>
<gene>
    <name type="primary">hypB</name>
    <name type="ordered locus">c3287</name>
</gene>
<organism>
    <name type="scientific">Escherichia coli O6:H1 (strain CFT073 / ATCC 700928 / UPEC)</name>
    <dbReference type="NCBI Taxonomy" id="199310"/>
    <lineage>
        <taxon>Bacteria</taxon>
        <taxon>Pseudomonadati</taxon>
        <taxon>Pseudomonadota</taxon>
        <taxon>Gammaproteobacteria</taxon>
        <taxon>Enterobacterales</taxon>
        <taxon>Enterobacteriaceae</taxon>
        <taxon>Escherichia</taxon>
    </lineage>
</organism>
<sequence length="290" mass="31565">MCTTCGCGEGNLYIEGDEHNPHSAFRSAPFAPAARPKMKITGIKAPEFTPSQTEEGDLHYGHGEAGTHAPGMSQRRMLEVEIDVLDKNNRLAERNRARFAARKQLVLNLVSSPGSGKTTLLTETLMRLKDSVPCAVIEGDQQTVNDAARIRATGTPAIQVNTGKGCHLDAQMIADAAPRLPLDDNGILFIENVGNLVCPASFDLGEKHKVAVLSVTEGEDKPLKYPHMFAAASLMLLNKVDLLPYLNFDVEKCIACAREVNPEIEIILISATSGEGMDQWLNWLETQRCA</sequence>
<keyword id="KW-0342">GTP-binding</keyword>
<keyword id="KW-0378">Hydrolase</keyword>
<keyword id="KW-0479">Metal-binding</keyword>
<keyword id="KW-0533">Nickel</keyword>
<keyword id="KW-0547">Nucleotide-binding</keyword>
<keyword id="KW-1185">Reference proteome</keyword>
<keyword id="KW-0862">Zinc</keyword>
<dbReference type="EMBL" id="AE014075">
    <property type="protein sequence ID" value="AAN81736.1"/>
    <property type="molecule type" value="Genomic_DNA"/>
</dbReference>
<dbReference type="RefSeq" id="WP_000337665.1">
    <property type="nucleotide sequence ID" value="NZ_CP051263.1"/>
</dbReference>
<dbReference type="SMR" id="P0AAN4"/>
<dbReference type="STRING" id="199310.c3287"/>
<dbReference type="GeneID" id="93779281"/>
<dbReference type="KEGG" id="ecc:c3287"/>
<dbReference type="eggNOG" id="COG0378">
    <property type="taxonomic scope" value="Bacteria"/>
</dbReference>
<dbReference type="HOGENOM" id="CLU_056148_1_0_6"/>
<dbReference type="BioCyc" id="ECOL199310:C3287-MONOMER"/>
<dbReference type="Proteomes" id="UP000001410">
    <property type="component" value="Chromosome"/>
</dbReference>
<dbReference type="GO" id="GO:0005525">
    <property type="term" value="F:GTP binding"/>
    <property type="evidence" value="ECO:0007669"/>
    <property type="project" value="UniProtKB-KW"/>
</dbReference>
<dbReference type="GO" id="GO:0003924">
    <property type="term" value="F:GTPase activity"/>
    <property type="evidence" value="ECO:0007669"/>
    <property type="project" value="InterPro"/>
</dbReference>
<dbReference type="GO" id="GO:0016151">
    <property type="term" value="F:nickel cation binding"/>
    <property type="evidence" value="ECO:0007669"/>
    <property type="project" value="InterPro"/>
</dbReference>
<dbReference type="GO" id="GO:0008270">
    <property type="term" value="F:zinc ion binding"/>
    <property type="evidence" value="ECO:0007669"/>
    <property type="project" value="TreeGrafter"/>
</dbReference>
<dbReference type="GO" id="GO:0051604">
    <property type="term" value="P:protein maturation"/>
    <property type="evidence" value="ECO:0007669"/>
    <property type="project" value="InterPro"/>
</dbReference>
<dbReference type="CDD" id="cd05390">
    <property type="entry name" value="HypB"/>
    <property type="match status" value="1"/>
</dbReference>
<dbReference type="FunFam" id="3.40.50.300:FF:000492">
    <property type="entry name" value="Hydrogenase nickel incorporation protein HypB"/>
    <property type="match status" value="1"/>
</dbReference>
<dbReference type="Gene3D" id="3.40.50.300">
    <property type="entry name" value="P-loop containing nucleotide triphosphate hydrolases"/>
    <property type="match status" value="1"/>
</dbReference>
<dbReference type="InterPro" id="IPR003495">
    <property type="entry name" value="CobW/HypB/UreG_nucleotide-bd"/>
</dbReference>
<dbReference type="InterPro" id="IPR004392">
    <property type="entry name" value="Hyd_mat_HypB"/>
</dbReference>
<dbReference type="InterPro" id="IPR027417">
    <property type="entry name" value="P-loop_NTPase"/>
</dbReference>
<dbReference type="NCBIfam" id="TIGR00073">
    <property type="entry name" value="hypB"/>
    <property type="match status" value="1"/>
</dbReference>
<dbReference type="NCBIfam" id="NF007775">
    <property type="entry name" value="PRK10463.1"/>
    <property type="match status" value="1"/>
</dbReference>
<dbReference type="PANTHER" id="PTHR30134:SF2">
    <property type="entry name" value="HYDROGENASE MATURATION FACTOR HYPB"/>
    <property type="match status" value="1"/>
</dbReference>
<dbReference type="PANTHER" id="PTHR30134">
    <property type="entry name" value="HYDROGENASE PROTEIN ASSEMBLY PROTEIN, NICKEL CHAPERONE"/>
    <property type="match status" value="1"/>
</dbReference>
<dbReference type="Pfam" id="PF02492">
    <property type="entry name" value="cobW"/>
    <property type="match status" value="1"/>
</dbReference>
<dbReference type="SUPFAM" id="SSF52540">
    <property type="entry name" value="P-loop containing nucleoside triphosphate hydrolases"/>
    <property type="match status" value="1"/>
</dbReference>
<comment type="function">
    <text evidence="1">Involved in the maturation of [NiFe] hydrogenases. Required for nickel insertion into the metal center of the hydrogenase. Exhibits a low intrinsic GTPase activity, which is essential for nickel insertion.</text>
</comment>
<comment type="similarity">
    <text evidence="2">Belongs to the SIMIBI class G3E GTPase family. HypB/HupM subfamily.</text>
</comment>
<accession>P0AAN4</accession>
<accession>P24190</accession>
<accession>Q46884</accession>